<keyword id="KW-0878">Amphibian defense peptide</keyword>
<keyword id="KW-0044">Antibiotic</keyword>
<keyword id="KW-0929">Antimicrobial</keyword>
<keyword id="KW-0165">Cleavage on pair of basic residues</keyword>
<keyword id="KW-1015">Disulfide bond</keyword>
<keyword id="KW-0964">Secreted</keyword>
<keyword id="KW-0732">Signal</keyword>
<sequence>MFTMKKSLLLLFFLGTISLSLCEEERGADEEEGDGEKLMKRGLFSILKGVGKIAIKGLGKNLGKMGLDLVSCKISKEC</sequence>
<comment type="function">
    <text evidence="1">Antimicrobial peptide.</text>
</comment>
<comment type="subcellular location">
    <subcellularLocation>
        <location evidence="3">Secreted</location>
    </subcellularLocation>
</comment>
<comment type="tissue specificity">
    <text evidence="6">Expressed by the skin glands.</text>
</comment>
<comment type="mass spectrometry"/>
<comment type="similarity">
    <text evidence="5">Belongs to the frog skin active peptide (FSAP) family. Esculentin subfamily.</text>
</comment>
<comment type="online information" name="The antimicrobial peptide database">
    <link uri="https://wangapd3.com/database/query_output.php?ID=00679"/>
</comment>
<evidence type="ECO:0000250" key="1"/>
<evidence type="ECO:0000255" key="2"/>
<evidence type="ECO:0000269" key="3">
    <source>
    </source>
</evidence>
<evidence type="ECO:0000303" key="4">
    <source>
    </source>
</evidence>
<evidence type="ECO:0000305" key="5"/>
<evidence type="ECO:0000305" key="6">
    <source>
    </source>
</evidence>
<evidence type="ECO:0000312" key="7">
    <source>
        <dbReference type="EMBL" id="CAJ34608.1"/>
    </source>
</evidence>
<accession>Q1JS89</accession>
<organism>
    <name type="scientific">Odorrana versabilis</name>
    <name type="common">Chinese bamboo leaf odorous frog</name>
    <name type="synonym">Rana versabilis</name>
    <dbReference type="NCBI Taxonomy" id="326940"/>
    <lineage>
        <taxon>Eukaryota</taxon>
        <taxon>Metazoa</taxon>
        <taxon>Chordata</taxon>
        <taxon>Craniata</taxon>
        <taxon>Vertebrata</taxon>
        <taxon>Euteleostomi</taxon>
        <taxon>Amphibia</taxon>
        <taxon>Batrachia</taxon>
        <taxon>Anura</taxon>
        <taxon>Neobatrachia</taxon>
        <taxon>Ranoidea</taxon>
        <taxon>Ranidae</taxon>
        <taxon>Odorrana</taxon>
    </lineage>
</organism>
<feature type="signal peptide" evidence="2">
    <location>
        <begin position="1"/>
        <end position="22"/>
    </location>
</feature>
<feature type="propeptide" id="PRO_0000268213">
    <location>
        <begin position="23"/>
        <end position="39"/>
    </location>
</feature>
<feature type="peptide" id="PRO_0000268214" description="Esculentin-2Vb">
    <location>
        <begin position="42"/>
        <end position="78"/>
    </location>
</feature>
<feature type="disulfide bond">
    <location>
        <begin position="72"/>
        <end position="78"/>
    </location>
</feature>
<name>ES2VB_ODOVE</name>
<protein>
    <recommendedName>
        <fullName evidence="7">Esculentin-2Vb</fullName>
        <shortName evidence="7">esc2Vb</shortName>
    </recommendedName>
    <alternativeName>
        <fullName evidence="4">Esculentin 2VEb</fullName>
    </alternativeName>
</protein>
<proteinExistence type="evidence at protein level"/>
<dbReference type="EMBL" id="AM113512">
    <property type="protein sequence ID" value="CAJ34608.1"/>
    <property type="molecule type" value="mRNA"/>
</dbReference>
<dbReference type="SMR" id="Q1JS89"/>
<dbReference type="GO" id="GO:0005576">
    <property type="term" value="C:extracellular region"/>
    <property type="evidence" value="ECO:0007669"/>
    <property type="project" value="UniProtKB-SubCell"/>
</dbReference>
<dbReference type="GO" id="GO:0050829">
    <property type="term" value="P:defense response to Gram-negative bacterium"/>
    <property type="evidence" value="ECO:0007669"/>
    <property type="project" value="UniProtKB-ARBA"/>
</dbReference>
<dbReference type="GO" id="GO:0050830">
    <property type="term" value="P:defense response to Gram-positive bacterium"/>
    <property type="evidence" value="ECO:0007669"/>
    <property type="project" value="UniProtKB-ARBA"/>
</dbReference>
<dbReference type="InterPro" id="IPR012521">
    <property type="entry name" value="Antimicrobial_frog_2"/>
</dbReference>
<dbReference type="InterPro" id="IPR004275">
    <property type="entry name" value="Frog_antimicrobial_propeptide"/>
</dbReference>
<dbReference type="Pfam" id="PF08023">
    <property type="entry name" value="Antimicrobial_2"/>
    <property type="match status" value="1"/>
</dbReference>
<dbReference type="Pfam" id="PF03032">
    <property type="entry name" value="FSAP_sig_propep"/>
    <property type="match status" value="1"/>
</dbReference>
<reference key="1">
    <citation type="journal article" date="2006" name="Peptides">
        <title>The Chinese bamboo leaf odorous frog (Rana (odorrana) versabilis) and north american rana frogs share the same families of skin antimicrobial peptides.</title>
        <authorList>
            <person name="Chen T."/>
            <person name="Zhou M."/>
            <person name="Rao P."/>
            <person name="Walker B."/>
            <person name="Shaw C."/>
        </authorList>
    </citation>
    <scope>NUCLEOTIDE SEQUENCE [MRNA]</scope>
    <scope>MASS SPECTROMETRY</scope>
    <scope>SUBCELLULAR LOCATION</scope>
    <source>
        <tissue>Skin secretion</tissue>
    </source>
</reference>